<organism>
    <name type="scientific">Lobularia maritima</name>
    <name type="common">Sweet alyssum</name>
    <name type="synonym">Alyssum maritimum</name>
    <dbReference type="NCBI Taxonomy" id="226051"/>
    <lineage>
        <taxon>Eukaryota</taxon>
        <taxon>Viridiplantae</taxon>
        <taxon>Streptophyta</taxon>
        <taxon>Embryophyta</taxon>
        <taxon>Tracheophyta</taxon>
        <taxon>Spermatophyta</taxon>
        <taxon>Magnoliopsida</taxon>
        <taxon>eudicotyledons</taxon>
        <taxon>Gunneridae</taxon>
        <taxon>Pentapetalae</taxon>
        <taxon>rosids</taxon>
        <taxon>malvids</taxon>
        <taxon>Brassicales</taxon>
        <taxon>Brassicaceae</taxon>
        <taxon>Anastaticeae</taxon>
        <taxon>Lobularia</taxon>
    </lineage>
</organism>
<feature type="chain" id="PRO_0000298579" description="NAD(P)H-quinone oxidoreductase subunit I, chloroplastic">
    <location>
        <begin position="1"/>
        <end position="167"/>
    </location>
</feature>
<feature type="domain" description="4Fe-4S ferredoxin-type 1" evidence="1">
    <location>
        <begin position="55"/>
        <end position="84"/>
    </location>
</feature>
<feature type="domain" description="4Fe-4S ferredoxin-type 2" evidence="1">
    <location>
        <begin position="95"/>
        <end position="124"/>
    </location>
</feature>
<feature type="binding site" evidence="1">
    <location>
        <position position="64"/>
    </location>
    <ligand>
        <name>[4Fe-4S] cluster</name>
        <dbReference type="ChEBI" id="CHEBI:49883"/>
        <label>1</label>
    </ligand>
</feature>
<feature type="binding site" evidence="1">
    <location>
        <position position="67"/>
    </location>
    <ligand>
        <name>[4Fe-4S] cluster</name>
        <dbReference type="ChEBI" id="CHEBI:49883"/>
        <label>1</label>
    </ligand>
</feature>
<feature type="binding site" evidence="1">
    <location>
        <position position="70"/>
    </location>
    <ligand>
        <name>[4Fe-4S] cluster</name>
        <dbReference type="ChEBI" id="CHEBI:49883"/>
        <label>1</label>
    </ligand>
</feature>
<feature type="binding site" evidence="1">
    <location>
        <position position="74"/>
    </location>
    <ligand>
        <name>[4Fe-4S] cluster</name>
        <dbReference type="ChEBI" id="CHEBI:49883"/>
        <label>2</label>
    </ligand>
</feature>
<feature type="binding site" evidence="1">
    <location>
        <position position="104"/>
    </location>
    <ligand>
        <name>[4Fe-4S] cluster</name>
        <dbReference type="ChEBI" id="CHEBI:49883"/>
        <label>2</label>
    </ligand>
</feature>
<feature type="binding site" evidence="1">
    <location>
        <position position="107"/>
    </location>
    <ligand>
        <name>[4Fe-4S] cluster</name>
        <dbReference type="ChEBI" id="CHEBI:49883"/>
        <label>2</label>
    </ligand>
</feature>
<feature type="binding site" evidence="1">
    <location>
        <position position="110"/>
    </location>
    <ligand>
        <name>[4Fe-4S] cluster</name>
        <dbReference type="ChEBI" id="CHEBI:49883"/>
        <label>2</label>
    </ligand>
</feature>
<feature type="binding site" evidence="1">
    <location>
        <position position="114"/>
    </location>
    <ligand>
        <name>[4Fe-4S] cluster</name>
        <dbReference type="ChEBI" id="CHEBI:49883"/>
        <label>1</label>
    </ligand>
</feature>
<keyword id="KW-0004">4Fe-4S</keyword>
<keyword id="KW-0150">Chloroplast</keyword>
<keyword id="KW-0408">Iron</keyword>
<keyword id="KW-0411">Iron-sulfur</keyword>
<keyword id="KW-0472">Membrane</keyword>
<keyword id="KW-0479">Metal-binding</keyword>
<keyword id="KW-0520">NAD</keyword>
<keyword id="KW-0521">NADP</keyword>
<keyword id="KW-0934">Plastid</keyword>
<keyword id="KW-0618">Plastoquinone</keyword>
<keyword id="KW-0874">Quinone</keyword>
<keyword id="KW-0677">Repeat</keyword>
<keyword id="KW-0793">Thylakoid</keyword>
<keyword id="KW-1278">Translocase</keyword>
<reference key="1">
    <citation type="submission" date="2007-03" db="EMBL/GenBank/DDBJ databases">
        <title>Sequencing analysis of Lobularia maritima chloroplast DNA.</title>
        <authorList>
            <person name="Hosouchi T."/>
            <person name="Tsuruoka H."/>
            <person name="Kotani H."/>
        </authorList>
    </citation>
    <scope>NUCLEOTIDE SEQUENCE [LARGE SCALE GENOMIC DNA]</scope>
</reference>
<protein>
    <recommendedName>
        <fullName evidence="1">NAD(P)H-quinone oxidoreductase subunit I, chloroplastic</fullName>
        <ecNumber evidence="1">7.1.1.-</ecNumber>
    </recommendedName>
    <alternativeName>
        <fullName evidence="1">NAD(P)H dehydrogenase subunit I</fullName>
        <shortName evidence="1">NDH subunit I</shortName>
    </alternativeName>
    <alternativeName>
        <fullName evidence="1">NADH-plastoquinone oxidoreductase subunit I</fullName>
    </alternativeName>
</protein>
<evidence type="ECO:0000255" key="1">
    <source>
        <dbReference type="HAMAP-Rule" id="MF_01351"/>
    </source>
</evidence>
<sequence>MLPMITGFMNYGQQTLRAARYIGQGFMITLSHTNRLPVTIQYPYEKVITSERFRGRIHFEFDKCIACEVCVRVCPIDLPVVDWKLETNIRKKRLLNYSIDFGICIFCGNCVEYCPTNCLSMTEEYEFSTYDRHELNYNQIALGRLPMSVIDDYTIRTILNSPQTKNG</sequence>
<geneLocation type="chloroplast"/>
<dbReference type="EC" id="7.1.1.-" evidence="1"/>
<dbReference type="EMBL" id="AP009375">
    <property type="protein sequence ID" value="BAF50606.1"/>
    <property type="molecule type" value="Genomic_DNA"/>
</dbReference>
<dbReference type="RefSeq" id="YP_001123781.1">
    <property type="nucleotide sequence ID" value="NC_009274.1"/>
</dbReference>
<dbReference type="SMR" id="A4QLQ1"/>
<dbReference type="GeneID" id="4964896"/>
<dbReference type="GO" id="GO:0009535">
    <property type="term" value="C:chloroplast thylakoid membrane"/>
    <property type="evidence" value="ECO:0007669"/>
    <property type="project" value="UniProtKB-SubCell"/>
</dbReference>
<dbReference type="GO" id="GO:0051539">
    <property type="term" value="F:4 iron, 4 sulfur cluster binding"/>
    <property type="evidence" value="ECO:0007669"/>
    <property type="project" value="UniProtKB-KW"/>
</dbReference>
<dbReference type="GO" id="GO:0005506">
    <property type="term" value="F:iron ion binding"/>
    <property type="evidence" value="ECO:0007669"/>
    <property type="project" value="UniProtKB-UniRule"/>
</dbReference>
<dbReference type="GO" id="GO:0008137">
    <property type="term" value="F:NADH dehydrogenase (ubiquinone) activity"/>
    <property type="evidence" value="ECO:0007669"/>
    <property type="project" value="InterPro"/>
</dbReference>
<dbReference type="GO" id="GO:0048038">
    <property type="term" value="F:quinone binding"/>
    <property type="evidence" value="ECO:0007669"/>
    <property type="project" value="UniProtKB-KW"/>
</dbReference>
<dbReference type="GO" id="GO:0019684">
    <property type="term" value="P:photosynthesis, light reaction"/>
    <property type="evidence" value="ECO:0007669"/>
    <property type="project" value="UniProtKB-UniRule"/>
</dbReference>
<dbReference type="FunFam" id="3.30.70.3270:FF:000006">
    <property type="entry name" value="NAD(P)H-quinone oxidoreductase subunit I, chloroplastic"/>
    <property type="match status" value="1"/>
</dbReference>
<dbReference type="Gene3D" id="3.30.70.3270">
    <property type="match status" value="1"/>
</dbReference>
<dbReference type="HAMAP" id="MF_01351">
    <property type="entry name" value="NDH1_NuoI"/>
    <property type="match status" value="1"/>
</dbReference>
<dbReference type="InterPro" id="IPR017896">
    <property type="entry name" value="4Fe4S_Fe-S-bd"/>
</dbReference>
<dbReference type="InterPro" id="IPR017900">
    <property type="entry name" value="4Fe4S_Fe_S_CS"/>
</dbReference>
<dbReference type="InterPro" id="IPR010226">
    <property type="entry name" value="NADH_quinone_OxRdtase_chainI"/>
</dbReference>
<dbReference type="InterPro" id="IPR004497">
    <property type="entry name" value="NDHI"/>
</dbReference>
<dbReference type="NCBIfam" id="TIGR00403">
    <property type="entry name" value="ndhI"/>
    <property type="match status" value="1"/>
</dbReference>
<dbReference type="NCBIfam" id="TIGR01971">
    <property type="entry name" value="NuoI"/>
    <property type="match status" value="1"/>
</dbReference>
<dbReference type="NCBIfam" id="NF004537">
    <property type="entry name" value="PRK05888.1-3"/>
    <property type="match status" value="1"/>
</dbReference>
<dbReference type="PANTHER" id="PTHR47275">
    <property type="entry name" value="NAD(P)H-QUINONE OXIDOREDUCTASE SUBUNIT I, CHLOROPLASTIC"/>
    <property type="match status" value="1"/>
</dbReference>
<dbReference type="PANTHER" id="PTHR47275:SF1">
    <property type="entry name" value="NAD(P)H-QUINONE OXIDOREDUCTASE SUBUNIT I, CHLOROPLASTIC"/>
    <property type="match status" value="1"/>
</dbReference>
<dbReference type="Pfam" id="PF13187">
    <property type="entry name" value="Fer4_9"/>
    <property type="match status" value="1"/>
</dbReference>
<dbReference type="SUPFAM" id="SSF54862">
    <property type="entry name" value="4Fe-4S ferredoxins"/>
    <property type="match status" value="1"/>
</dbReference>
<dbReference type="PROSITE" id="PS00198">
    <property type="entry name" value="4FE4S_FER_1"/>
    <property type="match status" value="2"/>
</dbReference>
<dbReference type="PROSITE" id="PS51379">
    <property type="entry name" value="4FE4S_FER_2"/>
    <property type="match status" value="2"/>
</dbReference>
<gene>
    <name evidence="1" type="primary">ndhI</name>
</gene>
<accession>A4QLQ1</accession>
<name>NDHI_LOBMA</name>
<proteinExistence type="inferred from homology"/>
<comment type="function">
    <text evidence="1">NDH shuttles electrons from NAD(P)H:plastoquinone, via FMN and iron-sulfur (Fe-S) centers, to quinones in the photosynthetic chain and possibly in a chloroplast respiratory chain. The immediate electron acceptor for the enzyme in this species is believed to be plastoquinone. Couples the redox reaction to proton translocation, and thus conserves the redox energy in a proton gradient.</text>
</comment>
<comment type="catalytic activity">
    <reaction evidence="1">
        <text>a plastoquinone + NADH + (n+1) H(+)(in) = a plastoquinol + NAD(+) + n H(+)(out)</text>
        <dbReference type="Rhea" id="RHEA:42608"/>
        <dbReference type="Rhea" id="RHEA-COMP:9561"/>
        <dbReference type="Rhea" id="RHEA-COMP:9562"/>
        <dbReference type="ChEBI" id="CHEBI:15378"/>
        <dbReference type="ChEBI" id="CHEBI:17757"/>
        <dbReference type="ChEBI" id="CHEBI:57540"/>
        <dbReference type="ChEBI" id="CHEBI:57945"/>
        <dbReference type="ChEBI" id="CHEBI:62192"/>
    </reaction>
</comment>
<comment type="catalytic activity">
    <reaction evidence="1">
        <text>a plastoquinone + NADPH + (n+1) H(+)(in) = a plastoquinol + NADP(+) + n H(+)(out)</text>
        <dbReference type="Rhea" id="RHEA:42612"/>
        <dbReference type="Rhea" id="RHEA-COMP:9561"/>
        <dbReference type="Rhea" id="RHEA-COMP:9562"/>
        <dbReference type="ChEBI" id="CHEBI:15378"/>
        <dbReference type="ChEBI" id="CHEBI:17757"/>
        <dbReference type="ChEBI" id="CHEBI:57783"/>
        <dbReference type="ChEBI" id="CHEBI:58349"/>
        <dbReference type="ChEBI" id="CHEBI:62192"/>
    </reaction>
</comment>
<comment type="cofactor">
    <cofactor evidence="1">
        <name>[4Fe-4S] cluster</name>
        <dbReference type="ChEBI" id="CHEBI:49883"/>
    </cofactor>
    <text evidence="1">Binds 2 [4Fe-4S] clusters per subunit.</text>
</comment>
<comment type="subunit">
    <text evidence="1">NDH is composed of at least 16 different subunits, 5 of which are encoded in the nucleus.</text>
</comment>
<comment type="subcellular location">
    <subcellularLocation>
        <location evidence="1">Plastid</location>
        <location evidence="1">Chloroplast thylakoid membrane</location>
        <topology evidence="1">Peripheral membrane protein</topology>
    </subcellularLocation>
</comment>
<comment type="similarity">
    <text evidence="1">Belongs to the complex I 23 kDa subunit family.</text>
</comment>